<organism>
    <name type="scientific">Acaryochloris marina (strain MBIC 11017)</name>
    <dbReference type="NCBI Taxonomy" id="329726"/>
    <lineage>
        <taxon>Bacteria</taxon>
        <taxon>Bacillati</taxon>
        <taxon>Cyanobacteriota</taxon>
        <taxon>Cyanophyceae</taxon>
        <taxon>Acaryochloridales</taxon>
        <taxon>Acaryochloridaceae</taxon>
        <taxon>Acaryochloris</taxon>
    </lineage>
</organism>
<evidence type="ECO:0000255" key="1">
    <source>
        <dbReference type="HAMAP-Rule" id="MF_01850"/>
    </source>
</evidence>
<reference key="1">
    <citation type="journal article" date="2008" name="Proc. Natl. Acad. Sci. U.S.A.">
        <title>Niche adaptation and genome expansion in the chlorophyll d-producing cyanobacterium Acaryochloris marina.</title>
        <authorList>
            <person name="Swingley W.D."/>
            <person name="Chen M."/>
            <person name="Cheung P.C."/>
            <person name="Conrad A.L."/>
            <person name="Dejesa L.C."/>
            <person name="Hao J."/>
            <person name="Honchak B.M."/>
            <person name="Karbach L.E."/>
            <person name="Kurdoglu A."/>
            <person name="Lahiri S."/>
            <person name="Mastrian S.D."/>
            <person name="Miyashita H."/>
            <person name="Page L."/>
            <person name="Ramakrishna P."/>
            <person name="Satoh S."/>
            <person name="Sattley W.M."/>
            <person name="Shimada Y."/>
            <person name="Taylor H.L."/>
            <person name="Tomo T."/>
            <person name="Tsuchiya T."/>
            <person name="Wang Z.T."/>
            <person name="Raymond J."/>
            <person name="Mimuro M."/>
            <person name="Blankenship R.E."/>
            <person name="Touchman J.W."/>
        </authorList>
    </citation>
    <scope>NUCLEOTIDE SEQUENCE [LARGE SCALE GENOMIC DNA]</scope>
    <source>
        <strain>MBIC 11017</strain>
    </source>
</reference>
<gene>
    <name evidence="1" type="primary">ttcA</name>
    <name type="ordered locus">AM1_1954</name>
</gene>
<name>TTCA_ACAM1</name>
<proteinExistence type="inferred from homology"/>
<dbReference type="EC" id="2.8.1.-" evidence="1"/>
<dbReference type="EMBL" id="CP000828">
    <property type="protein sequence ID" value="ABW26970.1"/>
    <property type="molecule type" value="Genomic_DNA"/>
</dbReference>
<dbReference type="SMR" id="B0CEK4"/>
<dbReference type="STRING" id="329726.AM1_1954"/>
<dbReference type="KEGG" id="amr:AM1_1954"/>
<dbReference type="eggNOG" id="COG0037">
    <property type="taxonomic scope" value="Bacteria"/>
</dbReference>
<dbReference type="HOGENOM" id="CLU_026481_0_0_3"/>
<dbReference type="Proteomes" id="UP000000268">
    <property type="component" value="Chromosome"/>
</dbReference>
<dbReference type="GO" id="GO:0005737">
    <property type="term" value="C:cytoplasm"/>
    <property type="evidence" value="ECO:0007669"/>
    <property type="project" value="UniProtKB-SubCell"/>
</dbReference>
<dbReference type="GO" id="GO:0051539">
    <property type="term" value="F:4 iron, 4 sulfur cluster binding"/>
    <property type="evidence" value="ECO:0007669"/>
    <property type="project" value="UniProtKB-UniRule"/>
</dbReference>
<dbReference type="GO" id="GO:0005524">
    <property type="term" value="F:ATP binding"/>
    <property type="evidence" value="ECO:0007669"/>
    <property type="project" value="UniProtKB-UniRule"/>
</dbReference>
<dbReference type="GO" id="GO:0000287">
    <property type="term" value="F:magnesium ion binding"/>
    <property type="evidence" value="ECO:0007669"/>
    <property type="project" value="UniProtKB-UniRule"/>
</dbReference>
<dbReference type="GO" id="GO:0016783">
    <property type="term" value="F:sulfurtransferase activity"/>
    <property type="evidence" value="ECO:0007669"/>
    <property type="project" value="UniProtKB-UniRule"/>
</dbReference>
<dbReference type="GO" id="GO:0000049">
    <property type="term" value="F:tRNA binding"/>
    <property type="evidence" value="ECO:0007669"/>
    <property type="project" value="UniProtKB-KW"/>
</dbReference>
<dbReference type="GO" id="GO:0034227">
    <property type="term" value="P:tRNA thio-modification"/>
    <property type="evidence" value="ECO:0007669"/>
    <property type="project" value="UniProtKB-UniRule"/>
</dbReference>
<dbReference type="CDD" id="cd24138">
    <property type="entry name" value="TtcA-like"/>
    <property type="match status" value="1"/>
</dbReference>
<dbReference type="Gene3D" id="3.40.50.620">
    <property type="entry name" value="HUPs"/>
    <property type="match status" value="1"/>
</dbReference>
<dbReference type="HAMAP" id="MF_01850">
    <property type="entry name" value="TtcA"/>
    <property type="match status" value="1"/>
</dbReference>
<dbReference type="InterPro" id="IPR014729">
    <property type="entry name" value="Rossmann-like_a/b/a_fold"/>
</dbReference>
<dbReference type="InterPro" id="IPR011063">
    <property type="entry name" value="TilS/TtcA_N"/>
</dbReference>
<dbReference type="InterPro" id="IPR012089">
    <property type="entry name" value="tRNA_Cyd_32_2_STrfase"/>
</dbReference>
<dbReference type="InterPro" id="IPR035107">
    <property type="entry name" value="tRNA_thiolation_TtcA_Ctu1"/>
</dbReference>
<dbReference type="NCBIfam" id="NF007972">
    <property type="entry name" value="PRK10696.1"/>
    <property type="match status" value="1"/>
</dbReference>
<dbReference type="PANTHER" id="PTHR43686:SF1">
    <property type="entry name" value="AMINOTRAN_5 DOMAIN-CONTAINING PROTEIN"/>
    <property type="match status" value="1"/>
</dbReference>
<dbReference type="PANTHER" id="PTHR43686">
    <property type="entry name" value="SULFURTRANSFERASE-RELATED"/>
    <property type="match status" value="1"/>
</dbReference>
<dbReference type="Pfam" id="PF01171">
    <property type="entry name" value="ATP_bind_3"/>
    <property type="match status" value="1"/>
</dbReference>
<dbReference type="PIRSF" id="PIRSF004976">
    <property type="entry name" value="ATPase_YdaO"/>
    <property type="match status" value="1"/>
</dbReference>
<dbReference type="SUPFAM" id="SSF52402">
    <property type="entry name" value="Adenine nucleotide alpha hydrolases-like"/>
    <property type="match status" value="1"/>
</dbReference>
<sequence>MSNLFMTATQLHPSKQLKKLQARLRGLVGKAIRDYNLIEAGDRIMVCLSGGKDSYTLLDILLHLQRAAPIDFEILAVNLDQKQPNFPEQVLPNYLNQLQVPYRIVEEDTYSTVKRVIPEGKTMCGLCSRLRRGILYRVAQEEQATKIALGHHREDIIETLFLNLFHAGKLEAMPPKLLSDNRQHMVIRPLAYCPEADIQRYADLRQFPIIPCTLCGSQETLQRVQVKQMLQAWEQETPGRLETIFRSLQNIELSQLADPQLFDFAHLAIAATPYADSPDRSGL</sequence>
<feature type="chain" id="PRO_0000348644" description="tRNA-cytidine(32) 2-sulfurtransferase">
    <location>
        <begin position="1"/>
        <end position="283"/>
    </location>
</feature>
<feature type="short sequence motif" description="PP-loop motif" evidence="1">
    <location>
        <begin position="49"/>
        <end position="54"/>
    </location>
</feature>
<feature type="binding site" evidence="1">
    <location>
        <position position="124"/>
    </location>
    <ligand>
        <name>[4Fe-4S] cluster</name>
        <dbReference type="ChEBI" id="CHEBI:49883"/>
    </ligand>
</feature>
<feature type="binding site" evidence="1">
    <location>
        <position position="127"/>
    </location>
    <ligand>
        <name>[4Fe-4S] cluster</name>
        <dbReference type="ChEBI" id="CHEBI:49883"/>
    </ligand>
</feature>
<feature type="binding site" evidence="1">
    <location>
        <position position="215"/>
    </location>
    <ligand>
        <name>[4Fe-4S] cluster</name>
        <dbReference type="ChEBI" id="CHEBI:49883"/>
    </ligand>
</feature>
<keyword id="KW-0004">4Fe-4S</keyword>
<keyword id="KW-0067">ATP-binding</keyword>
<keyword id="KW-0963">Cytoplasm</keyword>
<keyword id="KW-0408">Iron</keyword>
<keyword id="KW-0411">Iron-sulfur</keyword>
<keyword id="KW-0460">Magnesium</keyword>
<keyword id="KW-0479">Metal-binding</keyword>
<keyword id="KW-0547">Nucleotide-binding</keyword>
<keyword id="KW-1185">Reference proteome</keyword>
<keyword id="KW-0694">RNA-binding</keyword>
<keyword id="KW-0808">Transferase</keyword>
<keyword id="KW-0819">tRNA processing</keyword>
<keyword id="KW-0820">tRNA-binding</keyword>
<protein>
    <recommendedName>
        <fullName evidence="1">tRNA-cytidine(32) 2-sulfurtransferase</fullName>
        <ecNumber evidence="1">2.8.1.-</ecNumber>
    </recommendedName>
    <alternativeName>
        <fullName evidence="1">Two-thiocytidine biosynthesis protein A</fullName>
    </alternativeName>
    <alternativeName>
        <fullName evidence="1">tRNA 2-thiocytidine biosynthesis protein TtcA</fullName>
    </alternativeName>
</protein>
<comment type="function">
    <text evidence="1">Catalyzes the ATP-dependent 2-thiolation of cytidine in position 32 of tRNA, to form 2-thiocytidine (s(2)C32). The sulfur atoms are provided by the cysteine/cysteine desulfurase (IscS) system.</text>
</comment>
<comment type="catalytic activity">
    <reaction evidence="1">
        <text>cytidine(32) in tRNA + S-sulfanyl-L-cysteinyl-[cysteine desulfurase] + AH2 + ATP = 2-thiocytidine(32) in tRNA + L-cysteinyl-[cysteine desulfurase] + A + AMP + diphosphate + H(+)</text>
        <dbReference type="Rhea" id="RHEA:57048"/>
        <dbReference type="Rhea" id="RHEA-COMP:10288"/>
        <dbReference type="Rhea" id="RHEA-COMP:12157"/>
        <dbReference type="Rhea" id="RHEA-COMP:12158"/>
        <dbReference type="Rhea" id="RHEA-COMP:14821"/>
        <dbReference type="ChEBI" id="CHEBI:13193"/>
        <dbReference type="ChEBI" id="CHEBI:15378"/>
        <dbReference type="ChEBI" id="CHEBI:17499"/>
        <dbReference type="ChEBI" id="CHEBI:29950"/>
        <dbReference type="ChEBI" id="CHEBI:30616"/>
        <dbReference type="ChEBI" id="CHEBI:33019"/>
        <dbReference type="ChEBI" id="CHEBI:61963"/>
        <dbReference type="ChEBI" id="CHEBI:82748"/>
        <dbReference type="ChEBI" id="CHEBI:141453"/>
        <dbReference type="ChEBI" id="CHEBI:456215"/>
    </reaction>
    <physiologicalReaction direction="left-to-right" evidence="1">
        <dbReference type="Rhea" id="RHEA:57049"/>
    </physiologicalReaction>
</comment>
<comment type="cofactor">
    <cofactor evidence="1">
        <name>Mg(2+)</name>
        <dbReference type="ChEBI" id="CHEBI:18420"/>
    </cofactor>
</comment>
<comment type="cofactor">
    <cofactor evidence="1">
        <name>[4Fe-4S] cluster</name>
        <dbReference type="ChEBI" id="CHEBI:49883"/>
    </cofactor>
    <text evidence="1">Binds 1 [4Fe-4S] cluster per subunit. The cluster is chelated by three Cys residues, the fourth Fe has a free coordination site that may bind a sulfur atom transferred from the persulfide of IscS.</text>
</comment>
<comment type="pathway">
    <text evidence="1">tRNA modification.</text>
</comment>
<comment type="subunit">
    <text evidence="1">Homodimer.</text>
</comment>
<comment type="subcellular location">
    <subcellularLocation>
        <location evidence="1">Cytoplasm</location>
    </subcellularLocation>
</comment>
<comment type="miscellaneous">
    <text evidence="1">The thiolation reaction likely consists of two steps: a first activation step by ATP to form an adenylated intermediate of the target base of tRNA, and a second nucleophilic substitution step of the sulfur (S) atom supplied by the hydrosulfide attached to the Fe-S cluster.</text>
</comment>
<comment type="similarity">
    <text evidence="1">Belongs to the TtcA family.</text>
</comment>
<accession>B0CEK4</accession>